<reference key="1">
    <citation type="journal article" date="1996" name="J. Mol. Biol.">
        <title>Multiple gene copies for bombyxin, an insulin-related peptide of the silkmoth Bombyx mori: structural signs for gene rearrangement and duplication responsible for generation of multiple molecular forms of bombyxin.</title>
        <authorList>
            <person name="Kondo H."/>
            <person name="Ino M."/>
            <person name="Suzuki A."/>
            <person name="Ishizaki H."/>
            <person name="Iwami M."/>
        </authorList>
    </citation>
    <scope>NUCLEOTIDE SEQUENCE [GENOMIC DNA]</scope>
    <source>
        <strain>Kinshu X Showa</strain>
    </source>
</reference>
<protein>
    <recommendedName>
        <fullName>Bombyxin B-10</fullName>
        <shortName>BBX-B10</shortName>
    </recommendedName>
    <alternativeName>
        <fullName>4K-prothoracicotropic hormone</fullName>
        <shortName>4K-PTTH</shortName>
    </alternativeName>
    <component>
        <recommendedName>
            <fullName>Bombyxin B-10 B chain</fullName>
        </recommendedName>
    </component>
    <component>
        <recommendedName>
            <fullName>Bombyxin B-10 A chain</fullName>
        </recommendedName>
    </component>
</protein>
<proteinExistence type="inferred from homology"/>
<feature type="signal peptide" evidence="2">
    <location>
        <begin position="1"/>
        <end position="19"/>
    </location>
</feature>
<feature type="peptide" id="PRO_0000016016" description="Bombyxin B-10 B chain">
    <location>
        <begin position="20"/>
        <end position="43"/>
    </location>
</feature>
<feature type="propeptide" id="PRO_0000016017" description="Bombyxin B-10 C peptide">
    <location>
        <begin position="46"/>
        <end position="64"/>
    </location>
</feature>
<feature type="peptide" id="PRO_0000016018" description="Bombyxin B-10 A chain">
    <location>
        <begin position="67"/>
        <end position="87"/>
    </location>
</feature>
<feature type="disulfide bond" description="Interchain (between B and A chains)" evidence="1">
    <location>
        <begin position="27"/>
        <end position="73"/>
    </location>
</feature>
<feature type="disulfide bond" description="Interchain (between B and A chains)" evidence="1">
    <location>
        <begin position="39"/>
        <end position="86"/>
    </location>
</feature>
<feature type="disulfide bond" evidence="1">
    <location>
        <begin position="72"/>
        <end position="77"/>
    </location>
</feature>
<organism>
    <name type="scientific">Bombyx mori</name>
    <name type="common">Silk moth</name>
    <dbReference type="NCBI Taxonomy" id="7091"/>
    <lineage>
        <taxon>Eukaryota</taxon>
        <taxon>Metazoa</taxon>
        <taxon>Ecdysozoa</taxon>
        <taxon>Arthropoda</taxon>
        <taxon>Hexapoda</taxon>
        <taxon>Insecta</taxon>
        <taxon>Pterygota</taxon>
        <taxon>Neoptera</taxon>
        <taxon>Endopterygota</taxon>
        <taxon>Lepidoptera</taxon>
        <taxon>Glossata</taxon>
        <taxon>Ditrysia</taxon>
        <taxon>Bombycoidea</taxon>
        <taxon>Bombycidae</taxon>
        <taxon>Bombycinae</taxon>
        <taxon>Bombyx</taxon>
    </lineage>
</organism>
<gene>
    <name type="primary">BBXB10</name>
</gene>
<sequence length="87" mass="9881">MKTILIFLVVISLMYSGEAQEVAHTYCGRHLADTLADLCFGVEKRSGAQYAPYFWTRQYLGSRGKRSVVDECCFRPCTLDVLLSYCD</sequence>
<dbReference type="EMBL" id="D00787">
    <property type="protein sequence ID" value="BAA00683.1"/>
    <property type="molecule type" value="Genomic_DNA"/>
</dbReference>
<dbReference type="PIR" id="JQ0836">
    <property type="entry name" value="JQ0836"/>
</dbReference>
<dbReference type="PIR" id="S69490">
    <property type="entry name" value="S69490"/>
</dbReference>
<dbReference type="RefSeq" id="NP_001121788.1">
    <property type="nucleotide sequence ID" value="NM_001128316.1"/>
</dbReference>
<dbReference type="PaxDb" id="7091-BGIBMGA011969-TA"/>
<dbReference type="EnsemblMetazoa" id="NM_001128316.1">
    <property type="protein sequence ID" value="NP_001121788.1"/>
    <property type="gene ID" value="GeneID_100169715"/>
</dbReference>
<dbReference type="GeneID" id="100169715"/>
<dbReference type="KEGG" id="bmor:100169715"/>
<dbReference type="CTD" id="100169715"/>
<dbReference type="eggNOG" id="ENOG502SESX">
    <property type="taxonomic scope" value="Eukaryota"/>
</dbReference>
<dbReference type="HOGENOM" id="CLU_125164_2_0_1"/>
<dbReference type="InParanoid" id="Q17194"/>
<dbReference type="OrthoDB" id="493443at7088"/>
<dbReference type="Proteomes" id="UP000005204">
    <property type="component" value="Unassembled WGS sequence"/>
</dbReference>
<dbReference type="GO" id="GO:0005615">
    <property type="term" value="C:extracellular space"/>
    <property type="evidence" value="ECO:0007669"/>
    <property type="project" value="InterPro"/>
</dbReference>
<dbReference type="GO" id="GO:0008083">
    <property type="term" value="F:growth factor activity"/>
    <property type="evidence" value="ECO:0007669"/>
    <property type="project" value="InterPro"/>
</dbReference>
<dbReference type="GO" id="GO:0005179">
    <property type="term" value="F:hormone activity"/>
    <property type="evidence" value="ECO:0007669"/>
    <property type="project" value="UniProtKB-KW"/>
</dbReference>
<dbReference type="CDD" id="cd04366">
    <property type="entry name" value="IlGF_insulin_bombyxin_like"/>
    <property type="match status" value="1"/>
</dbReference>
<dbReference type="Gene3D" id="1.10.100.10">
    <property type="entry name" value="Insulin-like"/>
    <property type="match status" value="1"/>
</dbReference>
<dbReference type="InterPro" id="IPR017097">
    <property type="entry name" value="Bombyxin"/>
</dbReference>
<dbReference type="InterPro" id="IPR027285">
    <property type="entry name" value="Bombyxin_B"/>
</dbReference>
<dbReference type="InterPro" id="IPR016179">
    <property type="entry name" value="Insulin-like"/>
</dbReference>
<dbReference type="InterPro" id="IPR036438">
    <property type="entry name" value="Insulin-like_sf"/>
</dbReference>
<dbReference type="InterPro" id="IPR022353">
    <property type="entry name" value="Insulin_CS"/>
</dbReference>
<dbReference type="InterPro" id="IPR022352">
    <property type="entry name" value="Insulin_family"/>
</dbReference>
<dbReference type="PANTHER" id="PTHR13647:SF4">
    <property type="entry name" value="INSULIN-LIKE PEPTIDE 1-RELATED"/>
    <property type="match status" value="1"/>
</dbReference>
<dbReference type="PANTHER" id="PTHR13647">
    <property type="entry name" value="INSULIN-LIKE PEPTIDE 2-RELATED"/>
    <property type="match status" value="1"/>
</dbReference>
<dbReference type="Pfam" id="PF00049">
    <property type="entry name" value="Insulin"/>
    <property type="match status" value="1"/>
</dbReference>
<dbReference type="PIRSF" id="PIRSF037038">
    <property type="entry name" value="Bombyxin"/>
    <property type="match status" value="1"/>
</dbReference>
<dbReference type="PIRSF" id="PIRSF500313">
    <property type="entry name" value="Bombyxin_B"/>
    <property type="match status" value="1"/>
</dbReference>
<dbReference type="PRINTS" id="PR02003">
    <property type="entry name" value="BOMBYXIN"/>
</dbReference>
<dbReference type="PRINTS" id="PR00276">
    <property type="entry name" value="INSULINFAMLY"/>
</dbReference>
<dbReference type="SMART" id="SM00078">
    <property type="entry name" value="IlGF"/>
    <property type="match status" value="1"/>
</dbReference>
<dbReference type="SUPFAM" id="SSF56994">
    <property type="entry name" value="Insulin-like"/>
    <property type="match status" value="1"/>
</dbReference>
<dbReference type="PROSITE" id="PS00262">
    <property type="entry name" value="INSULIN"/>
    <property type="match status" value="1"/>
</dbReference>
<evidence type="ECO:0000250" key="1"/>
<evidence type="ECO:0000255" key="2"/>
<evidence type="ECO:0000305" key="3"/>
<name>BXB10_BOMMO</name>
<keyword id="KW-0165">Cleavage on pair of basic residues</keyword>
<keyword id="KW-1015">Disulfide bond</keyword>
<keyword id="KW-0372">Hormone</keyword>
<keyword id="KW-1185">Reference proteome</keyword>
<keyword id="KW-0964">Secreted</keyword>
<keyword id="KW-0732">Signal</keyword>
<accession>Q17194</accession>
<comment type="function">
    <text>Brain peptide responsible for activation of prothoracic glands to produce ecdysone in insects.</text>
</comment>
<comment type="subunit">
    <text>Heterodimer of a B chain and an A chain linked by two disulfide bonds.</text>
</comment>
<comment type="subcellular location">
    <subcellularLocation>
        <location>Secreted</location>
    </subcellularLocation>
</comment>
<comment type="miscellaneous">
    <text>Silk worm has two kinds of PTTH: 4K-PTTH and 22K-PTTH; there are many forms of 4K-PTTH.</text>
</comment>
<comment type="similarity">
    <text evidence="3">Belongs to the insulin family.</text>
</comment>